<gene>
    <name evidence="12" type="primary">NAGA</name>
</gene>
<accession>P17050</accession>
<dbReference type="EC" id="3.2.1.49" evidence="5"/>
<dbReference type="EMBL" id="M62783">
    <property type="protein sequence ID" value="AAA51677.1"/>
    <property type="molecule type" value="mRNA"/>
</dbReference>
<dbReference type="EMBL" id="M59199">
    <property type="protein sequence ID" value="AAB06718.1"/>
    <property type="molecule type" value="Genomic_DNA"/>
</dbReference>
<dbReference type="EMBL" id="M29276">
    <property type="protein sequence ID" value="AAA59902.1"/>
    <property type="status" value="ALT_FRAME"/>
    <property type="molecule type" value="mRNA"/>
</dbReference>
<dbReference type="EMBL" id="M38083">
    <property type="protein sequence ID" value="AAA36351.1"/>
    <property type="molecule type" value="mRNA"/>
</dbReference>
<dbReference type="EMBL" id="CR456527">
    <property type="protein sequence ID" value="CAG30413.1"/>
    <property type="molecule type" value="mRNA"/>
</dbReference>
<dbReference type="EMBL" id="Z99716">
    <property type="status" value="NOT_ANNOTATED_CDS"/>
    <property type="molecule type" value="Genomic_DNA"/>
</dbReference>
<dbReference type="EMBL" id="BC000095">
    <property type="protein sequence ID" value="AAH00095.1"/>
    <property type="molecule type" value="mRNA"/>
</dbReference>
<dbReference type="CCDS" id="CCDS14030.1"/>
<dbReference type="PIR" id="A33265">
    <property type="entry name" value="A33265"/>
</dbReference>
<dbReference type="PIR" id="A36530">
    <property type="entry name" value="A35485"/>
</dbReference>
<dbReference type="RefSeq" id="NP_000253.1">
    <property type="nucleotide sequence ID" value="NM_000262.3"/>
</dbReference>
<dbReference type="RefSeq" id="NP_001349777.1">
    <property type="nucleotide sequence ID" value="NM_001362848.1"/>
</dbReference>
<dbReference type="RefSeq" id="NP_001349779.1">
    <property type="nucleotide sequence ID" value="NM_001362850.1"/>
</dbReference>
<dbReference type="RefSeq" id="XP_005261672.1">
    <property type="nucleotide sequence ID" value="XM_005261615.4"/>
</dbReference>
<dbReference type="RefSeq" id="XP_005261673.1">
    <property type="nucleotide sequence ID" value="XM_005261616.4"/>
</dbReference>
<dbReference type="PDB" id="3H53">
    <property type="method" value="X-ray"/>
    <property type="resolution" value="2.01 A"/>
    <property type="chains" value="A/B=18-411"/>
</dbReference>
<dbReference type="PDB" id="3H54">
    <property type="method" value="X-ray"/>
    <property type="resolution" value="2.20 A"/>
    <property type="chains" value="A/B=18-411"/>
</dbReference>
<dbReference type="PDB" id="3H55">
    <property type="method" value="X-ray"/>
    <property type="resolution" value="1.91 A"/>
    <property type="chains" value="A/B=18-411"/>
</dbReference>
<dbReference type="PDB" id="3IGU">
    <property type="method" value="X-ray"/>
    <property type="resolution" value="2.15 A"/>
    <property type="chains" value="A/B=18-411"/>
</dbReference>
<dbReference type="PDB" id="4DO4">
    <property type="method" value="X-ray"/>
    <property type="resolution" value="1.40 A"/>
    <property type="chains" value="A/B=18-411"/>
</dbReference>
<dbReference type="PDB" id="4DO5">
    <property type="method" value="X-ray"/>
    <property type="resolution" value="1.51 A"/>
    <property type="chains" value="A/B=18-411"/>
</dbReference>
<dbReference type="PDB" id="4DO6">
    <property type="method" value="X-ray"/>
    <property type="resolution" value="1.60 A"/>
    <property type="chains" value="A/B=18-411"/>
</dbReference>
<dbReference type="PDBsum" id="3H53"/>
<dbReference type="PDBsum" id="3H54"/>
<dbReference type="PDBsum" id="3H55"/>
<dbReference type="PDBsum" id="3IGU"/>
<dbReference type="PDBsum" id="4DO4"/>
<dbReference type="PDBsum" id="4DO5"/>
<dbReference type="PDBsum" id="4DO6"/>
<dbReference type="SMR" id="P17050"/>
<dbReference type="BioGRID" id="110749">
    <property type="interactions" value="91"/>
</dbReference>
<dbReference type="FunCoup" id="P17050">
    <property type="interactions" value="489"/>
</dbReference>
<dbReference type="IntAct" id="P17050">
    <property type="interactions" value="49"/>
</dbReference>
<dbReference type="MINT" id="P17050"/>
<dbReference type="STRING" id="9606.ENSP00000379680"/>
<dbReference type="ChEMBL" id="CHEMBL3132"/>
<dbReference type="DrugBank" id="DB09462">
    <property type="generic name" value="Glycerin"/>
</dbReference>
<dbReference type="SwissLipids" id="SLP:000001402"/>
<dbReference type="CAZy" id="GH27">
    <property type="family name" value="Glycoside Hydrolase Family 27"/>
</dbReference>
<dbReference type="GlyConnect" id="45">
    <property type="glycosylation" value="57 N-Linked glycans (2 sites)"/>
</dbReference>
<dbReference type="GlyCosmos" id="P17050">
    <property type="glycosylation" value="5 sites, 84 glycans"/>
</dbReference>
<dbReference type="GlyGen" id="P17050">
    <property type="glycosylation" value="6 sites, 94 N-linked glycans (6 sites), 1 O-linked glycan (1 site)"/>
</dbReference>
<dbReference type="iPTMnet" id="P17050"/>
<dbReference type="PhosphoSitePlus" id="P17050"/>
<dbReference type="SwissPalm" id="P17050"/>
<dbReference type="BioMuta" id="NAGA"/>
<dbReference type="DMDM" id="127801"/>
<dbReference type="CPTAC" id="CPTAC-2228"/>
<dbReference type="jPOST" id="P17050"/>
<dbReference type="MassIVE" id="P17050"/>
<dbReference type="PaxDb" id="9606-ENSP00000379680"/>
<dbReference type="PeptideAtlas" id="P17050"/>
<dbReference type="ProteomicsDB" id="53450"/>
<dbReference type="Pumba" id="P17050"/>
<dbReference type="Antibodypedia" id="275">
    <property type="antibodies" value="185 antibodies from 23 providers"/>
</dbReference>
<dbReference type="DNASU" id="4668"/>
<dbReference type="Ensembl" id="ENST00000396398.8">
    <property type="protein sequence ID" value="ENSP00000379680.3"/>
    <property type="gene ID" value="ENSG00000198951.12"/>
</dbReference>
<dbReference type="Ensembl" id="ENST00000402937.1">
    <property type="protein sequence ID" value="ENSP00000384603.1"/>
    <property type="gene ID" value="ENSG00000198951.12"/>
</dbReference>
<dbReference type="Ensembl" id="ENST00000403363.5">
    <property type="protein sequence ID" value="ENSP00000385283.1"/>
    <property type="gene ID" value="ENSG00000198951.12"/>
</dbReference>
<dbReference type="GeneID" id="4668"/>
<dbReference type="KEGG" id="hsa:4668"/>
<dbReference type="MANE-Select" id="ENST00000396398.8">
    <property type="protein sequence ID" value="ENSP00000379680.3"/>
    <property type="RefSeq nucleotide sequence ID" value="NM_000262.3"/>
    <property type="RefSeq protein sequence ID" value="NP_000253.1"/>
</dbReference>
<dbReference type="UCSC" id="uc003bbw.5">
    <property type="organism name" value="human"/>
</dbReference>
<dbReference type="AGR" id="HGNC:7631"/>
<dbReference type="CTD" id="4668"/>
<dbReference type="DisGeNET" id="4668"/>
<dbReference type="GeneCards" id="NAGA"/>
<dbReference type="HGNC" id="HGNC:7631">
    <property type="gene designation" value="NAGA"/>
</dbReference>
<dbReference type="HPA" id="ENSG00000198951">
    <property type="expression patterns" value="Low tissue specificity"/>
</dbReference>
<dbReference type="MalaCards" id="NAGA"/>
<dbReference type="MIM" id="104170">
    <property type="type" value="gene"/>
</dbReference>
<dbReference type="MIM" id="609241">
    <property type="type" value="phenotype"/>
</dbReference>
<dbReference type="MIM" id="609242">
    <property type="type" value="phenotype"/>
</dbReference>
<dbReference type="neXtProt" id="NX_P17050"/>
<dbReference type="OpenTargets" id="ENSG00000198951"/>
<dbReference type="Orphanet" id="79279">
    <property type="disease" value="Alpha-N-acetylgalactosaminidase deficiency type 1"/>
</dbReference>
<dbReference type="Orphanet" id="79280">
    <property type="disease" value="Alpha-N-acetylgalactosaminidase deficiency type 2"/>
</dbReference>
<dbReference type="Orphanet" id="79281">
    <property type="disease" value="Alpha-N-acetylgalactosaminidase deficiency type 3"/>
</dbReference>
<dbReference type="PharmGKB" id="PA31435"/>
<dbReference type="VEuPathDB" id="HostDB:ENSG00000198951"/>
<dbReference type="eggNOG" id="KOG2366">
    <property type="taxonomic scope" value="Eukaryota"/>
</dbReference>
<dbReference type="GeneTree" id="ENSGT00390000008751"/>
<dbReference type="HOGENOM" id="CLU_013093_0_0_1"/>
<dbReference type="InParanoid" id="P17050"/>
<dbReference type="OMA" id="DRYPPMR"/>
<dbReference type="OrthoDB" id="5795902at2759"/>
<dbReference type="PAN-GO" id="P17050">
    <property type="GO annotations" value="5 GO annotations based on evolutionary models"/>
</dbReference>
<dbReference type="PhylomeDB" id="P17050"/>
<dbReference type="TreeFam" id="TF312909"/>
<dbReference type="BioCyc" id="MetaCyc:HS01993-MONOMER"/>
<dbReference type="BRENDA" id="3.2.1.49">
    <property type="organism ID" value="2681"/>
</dbReference>
<dbReference type="PathwayCommons" id="P17050"/>
<dbReference type="SABIO-RK" id="P17050"/>
<dbReference type="SignaLink" id="P17050"/>
<dbReference type="BioGRID-ORCS" id="4668">
    <property type="hits" value="8 hits in 1165 CRISPR screens"/>
</dbReference>
<dbReference type="ChiTaRS" id="NAGA">
    <property type="organism name" value="human"/>
</dbReference>
<dbReference type="EvolutionaryTrace" id="P17050"/>
<dbReference type="GeneWiki" id="NAGA_(gene)"/>
<dbReference type="GenomeRNAi" id="4668"/>
<dbReference type="Pharos" id="P17050">
    <property type="development level" value="Tbio"/>
</dbReference>
<dbReference type="PRO" id="PR:P17050"/>
<dbReference type="Proteomes" id="UP000005640">
    <property type="component" value="Chromosome 22"/>
</dbReference>
<dbReference type="RNAct" id="P17050">
    <property type="molecule type" value="protein"/>
</dbReference>
<dbReference type="Bgee" id="ENSG00000198951">
    <property type="expression patterns" value="Expressed in monocyte and 171 other cell types or tissues"/>
</dbReference>
<dbReference type="ExpressionAtlas" id="P17050">
    <property type="expression patterns" value="baseline and differential"/>
</dbReference>
<dbReference type="GO" id="GO:0005737">
    <property type="term" value="C:cytoplasm"/>
    <property type="evidence" value="ECO:0000318"/>
    <property type="project" value="GO_Central"/>
</dbReference>
<dbReference type="GO" id="GO:0070062">
    <property type="term" value="C:extracellular exosome"/>
    <property type="evidence" value="ECO:0007005"/>
    <property type="project" value="UniProtKB"/>
</dbReference>
<dbReference type="GO" id="GO:0005764">
    <property type="term" value="C:lysosome"/>
    <property type="evidence" value="ECO:0007669"/>
    <property type="project" value="UniProtKB-SubCell"/>
</dbReference>
<dbReference type="GO" id="GO:0016020">
    <property type="term" value="C:membrane"/>
    <property type="evidence" value="ECO:0007669"/>
    <property type="project" value="GOC"/>
</dbReference>
<dbReference type="GO" id="GO:0004557">
    <property type="term" value="F:alpha-galactosidase activity"/>
    <property type="evidence" value="ECO:0000318"/>
    <property type="project" value="GO_Central"/>
</dbReference>
<dbReference type="GO" id="GO:0008456">
    <property type="term" value="F:alpha-N-acetylgalactosaminidase activity"/>
    <property type="evidence" value="ECO:0000314"/>
    <property type="project" value="UniProtKB"/>
</dbReference>
<dbReference type="GO" id="GO:0042803">
    <property type="term" value="F:protein homodimerization activity"/>
    <property type="evidence" value="ECO:0000353"/>
    <property type="project" value="UniProtKB"/>
</dbReference>
<dbReference type="GO" id="GO:0016052">
    <property type="term" value="P:carbohydrate catabolic process"/>
    <property type="evidence" value="ECO:0000314"/>
    <property type="project" value="UniProtKB"/>
</dbReference>
<dbReference type="GO" id="GO:0019377">
    <property type="term" value="P:glycolipid catabolic process"/>
    <property type="evidence" value="ECO:0000315"/>
    <property type="project" value="UniProtKB"/>
</dbReference>
<dbReference type="GO" id="GO:0016139">
    <property type="term" value="P:glycoside catabolic process"/>
    <property type="evidence" value="ECO:0000318"/>
    <property type="project" value="GO_Central"/>
</dbReference>
<dbReference type="GO" id="GO:0009311">
    <property type="term" value="P:oligosaccharide metabolic process"/>
    <property type="evidence" value="ECO:0000318"/>
    <property type="project" value="GO_Central"/>
</dbReference>
<dbReference type="CDD" id="cd14792">
    <property type="entry name" value="GH27"/>
    <property type="match status" value="1"/>
</dbReference>
<dbReference type="FunFam" id="2.60.40.1180:FF:000025">
    <property type="entry name" value="Alpha-galactosidase"/>
    <property type="match status" value="1"/>
</dbReference>
<dbReference type="FunFam" id="3.20.20.70:FF:000070">
    <property type="entry name" value="Alpha-galactosidase"/>
    <property type="match status" value="1"/>
</dbReference>
<dbReference type="Gene3D" id="3.20.20.70">
    <property type="entry name" value="Aldolase class I"/>
    <property type="match status" value="1"/>
</dbReference>
<dbReference type="Gene3D" id="2.60.40.1180">
    <property type="entry name" value="Golgi alpha-mannosidase II"/>
    <property type="match status" value="1"/>
</dbReference>
<dbReference type="InterPro" id="IPR013785">
    <property type="entry name" value="Aldolase_TIM"/>
</dbReference>
<dbReference type="InterPro" id="IPR002241">
    <property type="entry name" value="Glyco_hydro_27"/>
</dbReference>
<dbReference type="InterPro" id="IPR000111">
    <property type="entry name" value="Glyco_hydro_27/36_CS"/>
</dbReference>
<dbReference type="InterPro" id="IPR013780">
    <property type="entry name" value="Glyco_hydro_b"/>
</dbReference>
<dbReference type="InterPro" id="IPR017853">
    <property type="entry name" value="Glycoside_hydrolase_SF"/>
</dbReference>
<dbReference type="InterPro" id="IPR035373">
    <property type="entry name" value="Melibiase/NAGA_C"/>
</dbReference>
<dbReference type="PANTHER" id="PTHR11452">
    <property type="entry name" value="ALPHA-GALACTOSIDASE/ALPHA-N-ACETYLGALACTOSAMINIDASE"/>
    <property type="match status" value="1"/>
</dbReference>
<dbReference type="PANTHER" id="PTHR11452:SF25">
    <property type="entry name" value="ALPHA-N-ACETYLGALACTOSAMINIDASE"/>
    <property type="match status" value="1"/>
</dbReference>
<dbReference type="Pfam" id="PF16499">
    <property type="entry name" value="Melibiase_2"/>
    <property type="match status" value="1"/>
</dbReference>
<dbReference type="Pfam" id="PF17450">
    <property type="entry name" value="Melibiase_2_C"/>
    <property type="match status" value="1"/>
</dbReference>
<dbReference type="PRINTS" id="PR00740">
    <property type="entry name" value="GLHYDRLASE27"/>
</dbReference>
<dbReference type="SUPFAM" id="SSF51445">
    <property type="entry name" value="(Trans)glycosidases"/>
    <property type="match status" value="1"/>
</dbReference>
<dbReference type="SUPFAM" id="SSF51011">
    <property type="entry name" value="Glycosyl hydrolase domain"/>
    <property type="match status" value="1"/>
</dbReference>
<dbReference type="PROSITE" id="PS00512">
    <property type="entry name" value="ALPHA_GALACTOSIDASE"/>
    <property type="match status" value="1"/>
</dbReference>
<organism>
    <name type="scientific">Homo sapiens</name>
    <name type="common">Human</name>
    <dbReference type="NCBI Taxonomy" id="9606"/>
    <lineage>
        <taxon>Eukaryota</taxon>
        <taxon>Metazoa</taxon>
        <taxon>Chordata</taxon>
        <taxon>Craniata</taxon>
        <taxon>Vertebrata</taxon>
        <taxon>Euteleostomi</taxon>
        <taxon>Mammalia</taxon>
        <taxon>Eutheria</taxon>
        <taxon>Euarchontoglires</taxon>
        <taxon>Primates</taxon>
        <taxon>Haplorrhini</taxon>
        <taxon>Catarrhini</taxon>
        <taxon>Hominidae</taxon>
        <taxon>Homo</taxon>
    </lineage>
</organism>
<sequence>MLLKTVLLLGHVAQVLMLDNGLLQTPPMGWLAWERFRCNINCDEDPKNCISEQLFMEMADRMAQDGWRDMGYTYLNIDDCWIGGRDASGRLMPDPKRFPHGIPFLADYVHSLGLKLGIYADMGNFTCMGYPGTTLDKVVQDAQTFAEWKVDMLKLDGCFSTPEERAQGYPKMAAALNATGRPIAFSCSWPAYEGGLPPRVNYSLLADICNLWRNYDDIQDSWWSVLSILNWFVEHQDILQPVAGPGHWNDPDMLLIGNFGLSLEQSRAQMALWTVLAAPLLMSTDLRTISAQNMDILQNPLMIKINQDPLGIQGRRIHKEKSLIEVYMRPLSNKASALVFFSCRTDMPYRYHSSLGQLNFTGSVIYEAQDVYSGDIISGLRDETNFTVIINPSGVVMWYLYPIKNLEMSQQ</sequence>
<protein>
    <recommendedName>
        <fullName evidence="11">Alpha-N-acetylgalactosaminidase</fullName>
        <ecNumber evidence="5">3.2.1.49</ecNumber>
    </recommendedName>
    <alternativeName>
        <fullName>Alpha-galactosidase B</fullName>
    </alternativeName>
</protein>
<comment type="function">
    <text evidence="10">Removes terminal alpha-N-acetylgalactosamine residues from glycolipids and glycopeptides. Required for the breakdown of glycolipids.</text>
</comment>
<comment type="catalytic activity">
    <reaction evidence="5">
        <text>Cleavage of non-reducing alpha-(1-&gt;3)-N-acetylgalactosamine residues from human blood group A and AB mucin glycoproteins, Forssman hapten and blood group A lacto series glycolipids.</text>
        <dbReference type="EC" id="3.2.1.49"/>
    </reaction>
</comment>
<comment type="catalytic activity">
    <reaction evidence="10">
        <text>a neolactoside IV(3)-alpha-GalNAc,IV(2)-alpha-Fuc-nLc4Cer(d18:1(4E)) + H2O = a neolactoside IV(2)-alpha-Fuc-nLc4Cer(d18:1(4E)) + N-acetyl-alpha-D-galactosamine</text>
        <dbReference type="Rhea" id="RHEA:48212"/>
        <dbReference type="ChEBI" id="CHEBI:15377"/>
        <dbReference type="ChEBI" id="CHEBI:28471"/>
        <dbReference type="ChEBI" id="CHEBI:28691"/>
        <dbReference type="ChEBI" id="CHEBI:40356"/>
    </reaction>
    <physiologicalReaction direction="left-to-right" evidence="10">
        <dbReference type="Rhea" id="RHEA:48213"/>
    </physiologicalReaction>
</comment>
<comment type="catalytic activity">
    <reaction evidence="10">
        <text>a neolactoside IV(3)-alpha-GalNAc,IV(2)-alpha-Fuc-nLc4Cer(d18:0) + H2O = a neolactoside IV(2)-alpha-Fuc-nLc4Cer(d18:0) + N-acetyl-alpha-D-galactosamine</text>
        <dbReference type="Rhea" id="RHEA:49304"/>
        <dbReference type="ChEBI" id="CHEBI:15377"/>
        <dbReference type="ChEBI" id="CHEBI:40356"/>
        <dbReference type="ChEBI" id="CHEBI:91118"/>
        <dbReference type="ChEBI" id="CHEBI:91119"/>
    </reaction>
    <physiologicalReaction direction="left-to-right" evidence="10">
        <dbReference type="Rhea" id="RHEA:49305"/>
    </physiologicalReaction>
</comment>
<comment type="catalytic activity">
    <reaction evidence="3">
        <text>a globoside IV3GalNAc-Gb4Cer + H2O = N-acetyl-alpha-D-galactosamine + a globoside Gb4Cer</text>
        <dbReference type="Rhea" id="RHEA:48412"/>
        <dbReference type="ChEBI" id="CHEBI:15377"/>
        <dbReference type="ChEBI" id="CHEBI:40356"/>
        <dbReference type="ChEBI" id="CHEBI:88167"/>
        <dbReference type="ChEBI" id="CHEBI:90400"/>
    </reaction>
    <physiologicalReaction direction="left-to-right" evidence="3">
        <dbReference type="Rhea" id="RHEA:48413"/>
    </physiologicalReaction>
</comment>
<comment type="subunit">
    <text evidence="5">Homodimer.</text>
</comment>
<comment type="subcellular location">
    <subcellularLocation>
        <location evidence="10">Lysosome</location>
    </subcellularLocation>
</comment>
<comment type="disease" evidence="6 9">
    <disease id="DI-02283">
        <name>Schindler disease</name>
        <acronym>SCHIND</acronym>
        <description>Form of NAGA deficiency characterized by early-onset neuroaxonal dystrophy and neurological signs (convulsion during fever, epilepsy, psychomotor retardation and hypotonia). NAGA deficiency is typically classified in three main phenotypes: NAGA deficiency type I (Schindler disease or Schindler disease type I) with severe manifestations; NAGA deficiency type II (Kanzazi disease or Schindler disease type II) which is mild; NAGA deficiency type III (Schindler disease type III) characterized by mild-to-moderate neurologic manifestations. NAGA deficiency results in the increased urinary excretion of glycopeptides and oligosaccharides containing alpha-N-acetylgalactosaminyl moieties. Inheritance is autosomal recessive.</description>
        <dbReference type="MIM" id="609241"/>
    </disease>
    <text>The disease is caused by variants affecting the gene represented in this entry.</text>
</comment>
<comment type="disease" evidence="2 8">
    <disease id="DI-01857">
        <name>Kanzaki disease</name>
        <acronym>KANZD</acronym>
        <description>Autosomal recessive disorder characterized by late-onset, angiokeratoma corporis diffusum and mild intellectual impairment.</description>
        <dbReference type="MIM" id="609242"/>
    </disease>
    <text>The disease is caused by variants affecting the gene represented in this entry.</text>
</comment>
<comment type="miscellaneous">
    <text>Alpha-galactosidase B was first found to be an isoenzyme of alpha-galactosidases, but apparently it differs from alpha-galactosidase A in substrate specificity and is alpha-N-acetylgalactosaminidase.</text>
</comment>
<comment type="similarity">
    <text evidence="11">Belongs to the glycosyl hydrolase 27 family.</text>
</comment>
<comment type="sequence caution" evidence="11">
    <conflict type="frameshift">
        <sequence resource="EMBL-CDS" id="AAA59902"/>
    </conflict>
</comment>
<feature type="signal peptide" evidence="7">
    <location>
        <begin position="1"/>
        <end position="17"/>
    </location>
</feature>
<feature type="chain" id="PRO_0000001018" description="Alpha-N-acetylgalactosaminidase">
    <location>
        <begin position="18"/>
        <end position="411"/>
    </location>
</feature>
<feature type="active site" description="Nucleophile">
    <location>
        <position position="156"/>
    </location>
</feature>
<feature type="active site" description="Proton donor">
    <location>
        <position position="217"/>
    </location>
</feature>
<feature type="binding site">
    <location>
        <begin position="78"/>
        <end position="79"/>
    </location>
    <ligand>
        <name>substrate</name>
    </ligand>
</feature>
<feature type="binding site">
    <location>
        <position position="154"/>
    </location>
    <ligand>
        <name>substrate</name>
    </ligand>
</feature>
<feature type="binding site">
    <location>
        <position position="188"/>
    </location>
    <ligand>
        <name>substrate</name>
    </ligand>
</feature>
<feature type="binding site">
    <location>
        <position position="213"/>
    </location>
    <ligand>
        <name>substrate</name>
    </ligand>
</feature>
<feature type="binding site">
    <location>
        <position position="217"/>
    </location>
    <ligand>
        <name>substrate</name>
    </ligand>
</feature>
<feature type="modified residue" description="Phosphoserine" evidence="13">
    <location>
        <position position="322"/>
    </location>
</feature>
<feature type="modified residue" description="Phosphoserine" evidence="13">
    <location>
        <position position="332"/>
    </location>
</feature>
<feature type="glycosylation site" description="N-linked (GlcNAc...) asparagine" evidence="5">
    <location>
        <position position="124"/>
    </location>
</feature>
<feature type="glycosylation site" description="N-linked (GlcNAc...) asparagine" evidence="4 5">
    <location>
        <position position="177"/>
    </location>
</feature>
<feature type="glycosylation site" description="N-linked (GlcNAc...) asparagine" evidence="4">
    <location>
        <position position="201"/>
    </location>
</feature>
<feature type="glycosylation site" description="N-linked (GlcNAc...) asparagine" evidence="1">
    <location>
        <position position="359"/>
    </location>
</feature>
<feature type="glycosylation site" description="N-linked (GlcNAc...) asparagine" evidence="5">
    <location>
        <position position="385"/>
    </location>
</feature>
<feature type="disulfide bond" evidence="5">
    <location>
        <begin position="38"/>
        <end position="80"/>
    </location>
</feature>
<feature type="disulfide bond" evidence="5">
    <location>
        <begin position="42"/>
        <end position="49"/>
    </location>
</feature>
<feature type="disulfide bond" evidence="5">
    <location>
        <begin position="127"/>
        <end position="158"/>
    </location>
</feature>
<feature type="disulfide bond" evidence="5">
    <location>
        <begin position="187"/>
        <end position="209"/>
    </location>
</feature>
<feature type="sequence variant" id="VAR_000496" description="In SCHIND; type III; dbSNP:rs121434532." evidence="9">
    <original>S</original>
    <variation>C</variation>
    <location>
        <position position="160"/>
    </location>
</feature>
<feature type="sequence variant" id="VAR_000497" description="In SCHIND; type I and type III; dbSNP:rs121434529." evidence="6 9">
    <original>E</original>
    <variation>K</variation>
    <location>
        <position position="325"/>
    </location>
</feature>
<feature type="sequence variant" id="VAR_022525" description="In KANZD; dbSNP:rs121434533." evidence="2">
    <original>R</original>
    <variation>Q</variation>
    <location>
        <position position="329"/>
    </location>
</feature>
<feature type="sequence variant" id="VAR_000498" description="In KANZD; loss of activity; dbSNP:rs121434530." evidence="8">
    <original>R</original>
    <variation>W</variation>
    <location>
        <position position="329"/>
    </location>
</feature>
<feature type="mutagenesis site" description="Loss of glycosylation site; no effect on enzyme activity and stability." evidence="5">
    <original>N</original>
    <variation>Q</variation>
    <location>
        <position position="201"/>
    </location>
</feature>
<feature type="sequence conflict" description="In Ref. 8; AA sequence." evidence="11" ref="8">
    <original>Q</original>
    <variation>N</variation>
    <location>
        <position position="24"/>
    </location>
</feature>
<feature type="sequence conflict" description="In Ref. 2; AAA59902." evidence="11" ref="2">
    <original>R</original>
    <variation>A</variation>
    <location>
        <position position="165"/>
    </location>
</feature>
<feature type="sequence conflict" description="In Ref. 2; AAA59902." evidence="11" ref="2">
    <original>A</original>
    <variation>G</variation>
    <location>
        <position position="175"/>
    </location>
</feature>
<feature type="sequence conflict" description="In Ref. 2; AAA59902." evidence="11" ref="2">
    <original>L</original>
    <variation>Q</variation>
    <location>
        <position position="205"/>
    </location>
</feature>
<feature type="strand" evidence="14">
    <location>
        <begin position="28"/>
        <end position="32"/>
    </location>
</feature>
<feature type="helix" evidence="14">
    <location>
        <begin position="33"/>
        <end position="36"/>
    </location>
</feature>
<feature type="turn" evidence="14">
    <location>
        <begin position="42"/>
        <end position="44"/>
    </location>
</feature>
<feature type="turn" evidence="14">
    <location>
        <begin position="46"/>
        <end position="48"/>
    </location>
</feature>
<feature type="strand" evidence="14">
    <location>
        <begin position="49"/>
        <end position="51"/>
    </location>
</feature>
<feature type="helix" evidence="14">
    <location>
        <begin position="52"/>
        <end position="64"/>
    </location>
</feature>
<feature type="helix" evidence="14">
    <location>
        <begin position="67"/>
        <end position="70"/>
    </location>
</feature>
<feature type="strand" evidence="14">
    <location>
        <begin position="74"/>
        <end position="76"/>
    </location>
</feature>
<feature type="strand" evidence="14">
    <location>
        <begin position="82"/>
        <end position="85"/>
    </location>
</feature>
<feature type="strand" evidence="14">
    <location>
        <begin position="91"/>
        <end position="93"/>
    </location>
</feature>
<feature type="turn" evidence="14">
    <location>
        <begin position="95"/>
        <end position="97"/>
    </location>
</feature>
<feature type="helix" evidence="14">
    <location>
        <begin position="102"/>
        <end position="111"/>
    </location>
</feature>
<feature type="strand" evidence="14">
    <location>
        <begin position="115"/>
        <end position="125"/>
    </location>
</feature>
<feature type="helix" evidence="14">
    <location>
        <begin position="135"/>
        <end position="137"/>
    </location>
</feature>
<feature type="helix" evidence="14">
    <location>
        <begin position="138"/>
        <end position="147"/>
    </location>
</feature>
<feature type="strand" evidence="14">
    <location>
        <begin position="152"/>
        <end position="156"/>
    </location>
</feature>
<feature type="helix" evidence="14">
    <location>
        <begin position="162"/>
        <end position="178"/>
    </location>
</feature>
<feature type="strand" evidence="14">
    <location>
        <begin position="184"/>
        <end position="187"/>
    </location>
</feature>
<feature type="helix" evidence="14">
    <location>
        <begin position="189"/>
        <end position="192"/>
    </location>
</feature>
<feature type="turn" evidence="14">
    <location>
        <begin position="197"/>
        <end position="199"/>
    </location>
</feature>
<feature type="helix" evidence="14">
    <location>
        <begin position="202"/>
        <end position="208"/>
    </location>
</feature>
<feature type="strand" evidence="14">
    <location>
        <begin position="210"/>
        <end position="213"/>
    </location>
</feature>
<feature type="helix" evidence="14">
    <location>
        <begin position="222"/>
        <end position="234"/>
    </location>
</feature>
<feature type="helix" evidence="14">
    <location>
        <begin position="236"/>
        <end position="239"/>
    </location>
</feature>
<feature type="helix" evidence="14">
    <location>
        <begin position="240"/>
        <end position="242"/>
    </location>
</feature>
<feature type="strand" evidence="14">
    <location>
        <begin position="247"/>
        <end position="250"/>
    </location>
</feature>
<feature type="strand" evidence="14">
    <location>
        <begin position="258"/>
        <end position="260"/>
    </location>
</feature>
<feature type="helix" evidence="14">
    <location>
        <begin position="263"/>
        <end position="275"/>
    </location>
</feature>
<feature type="strand" evidence="14">
    <location>
        <begin position="280"/>
        <end position="282"/>
    </location>
</feature>
<feature type="turn" evidence="14">
    <location>
        <begin position="286"/>
        <end position="288"/>
    </location>
</feature>
<feature type="helix" evidence="14">
    <location>
        <begin position="291"/>
        <end position="297"/>
    </location>
</feature>
<feature type="helix" evidence="14">
    <location>
        <begin position="300"/>
        <end position="306"/>
    </location>
</feature>
<feature type="strand" evidence="14">
    <location>
        <begin position="315"/>
        <end position="319"/>
    </location>
</feature>
<feature type="strand" evidence="14">
    <location>
        <begin position="323"/>
        <end position="330"/>
    </location>
</feature>
<feature type="helix" evidence="14">
    <location>
        <begin position="332"/>
        <end position="334"/>
    </location>
</feature>
<feature type="strand" evidence="14">
    <location>
        <begin position="336"/>
        <end position="342"/>
    </location>
</feature>
<feature type="strand" evidence="14">
    <location>
        <begin position="345"/>
        <end position="347"/>
    </location>
</feature>
<feature type="strand" evidence="14">
    <location>
        <begin position="349"/>
        <end position="354"/>
    </location>
</feature>
<feature type="helix" evidence="14">
    <location>
        <begin position="355"/>
        <end position="358"/>
    </location>
</feature>
<feature type="strand" evidence="14">
    <location>
        <begin position="365"/>
        <end position="370"/>
    </location>
</feature>
<feature type="turn" evidence="14">
    <location>
        <begin position="371"/>
        <end position="373"/>
    </location>
</feature>
<feature type="strand" evidence="14">
    <location>
        <begin position="376"/>
        <end position="380"/>
    </location>
</feature>
<feature type="strand" evidence="14">
    <location>
        <begin position="385"/>
        <end position="390"/>
    </location>
</feature>
<feature type="strand" evidence="14">
    <location>
        <begin position="395"/>
        <end position="403"/>
    </location>
</feature>
<feature type="helix" evidence="14">
    <location>
        <begin position="405"/>
        <end position="408"/>
    </location>
</feature>
<reference key="1">
    <citation type="journal article" date="1990" name="J. Biol. Chem.">
        <title>Human alpha-N-acetylgalactosaminidase-molecular cloning, nucleotide sequence, and expression of a full-length cDNA. Homology with human alpha-galactosidase A suggests evolution from a common ancestral gene.</title>
        <authorList>
            <person name="Wang A.M."/>
            <person name="Bishop D.F."/>
            <person name="Desnick R.J."/>
        </authorList>
    </citation>
    <scope>NUCLEOTIDE SEQUENCE [MRNA]</scope>
    <scope>PARTIAL PROTEIN SEQUENCE</scope>
    <source>
        <tissue>Lung</tissue>
    </source>
</reference>
<reference key="2">
    <citation type="journal article" date="1991" name="Genomics">
        <title>Structural organization and complete sequence of the human alpha-N-acetylgalactosaminidase gene: homology with the alpha-galactosidase A gene provides evidence for evolution from a common ancestral gene.</title>
        <authorList>
            <person name="Wang A.M."/>
            <person name="Desnick R.J."/>
        </authorList>
    </citation>
    <scope>NUCLEOTIDE SEQUENCE [GENOMIC DNA]</scope>
</reference>
<reference key="3">
    <citation type="journal article" date="1989" name="Biochem. Biophys. Res. Commun.">
        <title>Molecular cloning of a full-length cDNA for human alpha-N-acetylgalactosaminidase (alpha-galactosidase B).</title>
        <authorList>
            <person name="Tsuji S."/>
            <person name="Yamauchi T."/>
            <person name="Hiraiwa M."/>
            <person name="Isobe T."/>
            <person name="Okuyama T."/>
            <person name="Sakimura K."/>
            <person name="Takahashi Y."/>
            <person name="Nishizawa M."/>
            <person name="Uda Y."/>
            <person name="Miyatake T."/>
        </authorList>
    </citation>
    <scope>NUCLEOTIDE SEQUENCE [MRNA]</scope>
    <source>
        <tissue>Placenta</tissue>
    </source>
</reference>
<reference key="4">
    <citation type="journal article" date="1990" name="Biochem. Biophys. Res. Commun.">
        <title>Molecular cloning of two species of cDNAs for human alpha-N-acetylgalactosaminidase and expression in mammalian cells.</title>
        <authorList>
            <person name="Yamauchi T."/>
            <person name="Hiraiwa M."/>
            <person name="Kobayashi H."/>
            <person name="Uda Y."/>
            <person name="Miyatake T."/>
            <person name="Tsuji S."/>
        </authorList>
    </citation>
    <scope>NUCLEOTIDE SEQUENCE [MRNA]</scope>
</reference>
<reference key="5">
    <citation type="journal article" date="2004" name="Genome Biol.">
        <title>A genome annotation-driven approach to cloning the human ORFeome.</title>
        <authorList>
            <person name="Collins J.E."/>
            <person name="Wright C.L."/>
            <person name="Edwards C.A."/>
            <person name="Davis M.P."/>
            <person name="Grinham J.A."/>
            <person name="Cole C.G."/>
            <person name="Goward M.E."/>
            <person name="Aguado B."/>
            <person name="Mallya M."/>
            <person name="Mokrab Y."/>
            <person name="Huckle E.J."/>
            <person name="Beare D.M."/>
            <person name="Dunham I."/>
        </authorList>
    </citation>
    <scope>NUCLEOTIDE SEQUENCE [LARGE SCALE MRNA]</scope>
</reference>
<reference key="6">
    <citation type="journal article" date="1999" name="Nature">
        <title>The DNA sequence of human chromosome 22.</title>
        <authorList>
            <person name="Dunham I."/>
            <person name="Hunt A.R."/>
            <person name="Collins J.E."/>
            <person name="Bruskiewich R."/>
            <person name="Beare D.M."/>
            <person name="Clamp M."/>
            <person name="Smink L.J."/>
            <person name="Ainscough R."/>
            <person name="Almeida J.P."/>
            <person name="Babbage A.K."/>
            <person name="Bagguley C."/>
            <person name="Bailey J."/>
            <person name="Barlow K.F."/>
            <person name="Bates K.N."/>
            <person name="Beasley O.P."/>
            <person name="Bird C.P."/>
            <person name="Blakey S.E."/>
            <person name="Bridgeman A.M."/>
            <person name="Buck D."/>
            <person name="Burgess J."/>
            <person name="Burrill W.D."/>
            <person name="Burton J."/>
            <person name="Carder C."/>
            <person name="Carter N.P."/>
            <person name="Chen Y."/>
            <person name="Clark G."/>
            <person name="Clegg S.M."/>
            <person name="Cobley V.E."/>
            <person name="Cole C.G."/>
            <person name="Collier R.E."/>
            <person name="Connor R."/>
            <person name="Conroy D."/>
            <person name="Corby N.R."/>
            <person name="Coville G.J."/>
            <person name="Cox A.V."/>
            <person name="Davis J."/>
            <person name="Dawson E."/>
            <person name="Dhami P.D."/>
            <person name="Dockree C."/>
            <person name="Dodsworth S.J."/>
            <person name="Durbin R.M."/>
            <person name="Ellington A.G."/>
            <person name="Evans K.L."/>
            <person name="Fey J.M."/>
            <person name="Fleming K."/>
            <person name="French L."/>
            <person name="Garner A.A."/>
            <person name="Gilbert J.G.R."/>
            <person name="Goward M.E."/>
            <person name="Grafham D.V."/>
            <person name="Griffiths M.N.D."/>
            <person name="Hall C."/>
            <person name="Hall R.E."/>
            <person name="Hall-Tamlyn G."/>
            <person name="Heathcott R.W."/>
            <person name="Ho S."/>
            <person name="Holmes S."/>
            <person name="Hunt S.E."/>
            <person name="Jones M.C."/>
            <person name="Kershaw J."/>
            <person name="Kimberley A.M."/>
            <person name="King A."/>
            <person name="Laird G.K."/>
            <person name="Langford C.F."/>
            <person name="Leversha M.A."/>
            <person name="Lloyd C."/>
            <person name="Lloyd D.M."/>
            <person name="Martyn I.D."/>
            <person name="Mashreghi-Mohammadi M."/>
            <person name="Matthews L.H."/>
            <person name="Mccann O.T."/>
            <person name="Mcclay J."/>
            <person name="Mclaren S."/>
            <person name="McMurray A.A."/>
            <person name="Milne S.A."/>
            <person name="Mortimore B.J."/>
            <person name="Odell C.N."/>
            <person name="Pavitt R."/>
            <person name="Pearce A.V."/>
            <person name="Pearson D."/>
            <person name="Phillimore B.J.C.T."/>
            <person name="Phillips S.H."/>
            <person name="Plumb R.W."/>
            <person name="Ramsay H."/>
            <person name="Ramsey Y."/>
            <person name="Rogers L."/>
            <person name="Ross M.T."/>
            <person name="Scott C.E."/>
            <person name="Sehra H.K."/>
            <person name="Skuce C.D."/>
            <person name="Smalley S."/>
            <person name="Smith M.L."/>
            <person name="Soderlund C."/>
            <person name="Spragon L."/>
            <person name="Steward C.A."/>
            <person name="Sulston J.E."/>
            <person name="Swann R.M."/>
            <person name="Vaudin M."/>
            <person name="Wall M."/>
            <person name="Wallis J.M."/>
            <person name="Whiteley M.N."/>
            <person name="Willey D.L."/>
            <person name="Williams L."/>
            <person name="Williams S.A."/>
            <person name="Williamson H."/>
            <person name="Wilmer T.E."/>
            <person name="Wilming L."/>
            <person name="Wright C.L."/>
            <person name="Hubbard T."/>
            <person name="Bentley D.R."/>
            <person name="Beck S."/>
            <person name="Rogers J."/>
            <person name="Shimizu N."/>
            <person name="Minoshima S."/>
            <person name="Kawasaki K."/>
            <person name="Sasaki T."/>
            <person name="Asakawa S."/>
            <person name="Kudoh J."/>
            <person name="Shintani A."/>
            <person name="Shibuya K."/>
            <person name="Yoshizaki Y."/>
            <person name="Aoki N."/>
            <person name="Mitsuyama S."/>
            <person name="Roe B.A."/>
            <person name="Chen F."/>
            <person name="Chu L."/>
            <person name="Crabtree J."/>
            <person name="Deschamps S."/>
            <person name="Do A."/>
            <person name="Do T."/>
            <person name="Dorman A."/>
            <person name="Fang F."/>
            <person name="Fu Y."/>
            <person name="Hu P."/>
            <person name="Hua A."/>
            <person name="Kenton S."/>
            <person name="Lai H."/>
            <person name="Lao H.I."/>
            <person name="Lewis J."/>
            <person name="Lewis S."/>
            <person name="Lin S.-P."/>
            <person name="Loh P."/>
            <person name="Malaj E."/>
            <person name="Nguyen T."/>
            <person name="Pan H."/>
            <person name="Phan S."/>
            <person name="Qi S."/>
            <person name="Qian Y."/>
            <person name="Ray L."/>
            <person name="Ren Q."/>
            <person name="Shaull S."/>
            <person name="Sloan D."/>
            <person name="Song L."/>
            <person name="Wang Q."/>
            <person name="Wang Y."/>
            <person name="Wang Z."/>
            <person name="White J."/>
            <person name="Willingham D."/>
            <person name="Wu H."/>
            <person name="Yao Z."/>
            <person name="Zhan M."/>
            <person name="Zhang G."/>
            <person name="Chissoe S."/>
            <person name="Murray J."/>
            <person name="Miller N."/>
            <person name="Minx P."/>
            <person name="Fulton R."/>
            <person name="Johnson D."/>
            <person name="Bemis G."/>
            <person name="Bentley D."/>
            <person name="Bradshaw H."/>
            <person name="Bourne S."/>
            <person name="Cordes M."/>
            <person name="Du Z."/>
            <person name="Fulton L."/>
            <person name="Goela D."/>
            <person name="Graves T."/>
            <person name="Hawkins J."/>
            <person name="Hinds K."/>
            <person name="Kemp K."/>
            <person name="Latreille P."/>
            <person name="Layman D."/>
            <person name="Ozersky P."/>
            <person name="Rohlfing T."/>
            <person name="Scheet P."/>
            <person name="Walker C."/>
            <person name="Wamsley A."/>
            <person name="Wohldmann P."/>
            <person name="Pepin K."/>
            <person name="Nelson J."/>
            <person name="Korf I."/>
            <person name="Bedell J.A."/>
            <person name="Hillier L.W."/>
            <person name="Mardis E."/>
            <person name="Waterston R."/>
            <person name="Wilson R."/>
            <person name="Emanuel B.S."/>
            <person name="Shaikh T."/>
            <person name="Kurahashi H."/>
            <person name="Saitta S."/>
            <person name="Budarf M.L."/>
            <person name="McDermid H.E."/>
            <person name="Johnson A."/>
            <person name="Wong A.C.C."/>
            <person name="Morrow B.E."/>
            <person name="Edelmann L."/>
            <person name="Kim U.J."/>
            <person name="Shizuya H."/>
            <person name="Simon M.I."/>
            <person name="Dumanski J.P."/>
            <person name="Peyrard M."/>
            <person name="Kedra D."/>
            <person name="Seroussi E."/>
            <person name="Fransson I."/>
            <person name="Tapia I."/>
            <person name="Bruder C.E."/>
            <person name="O'Brien K.P."/>
            <person name="Wilkinson P."/>
            <person name="Bodenteich A."/>
            <person name="Hartman K."/>
            <person name="Hu X."/>
            <person name="Khan A.S."/>
            <person name="Lane L."/>
            <person name="Tilahun Y."/>
            <person name="Wright H."/>
        </authorList>
    </citation>
    <scope>NUCLEOTIDE SEQUENCE [LARGE SCALE GENOMIC DNA]</scope>
</reference>
<reference key="7">
    <citation type="journal article" date="2004" name="Genome Res.">
        <title>The status, quality, and expansion of the NIH full-length cDNA project: the Mammalian Gene Collection (MGC).</title>
        <authorList>
            <consortium name="The MGC Project Team"/>
        </authorList>
    </citation>
    <scope>NUCLEOTIDE SEQUENCE [LARGE SCALE MRNA]</scope>
    <source>
        <tissue>Placenta</tissue>
    </source>
</reference>
<reference key="8">
    <citation type="journal article" date="1990" name="Biochem. Biophys. Res. Commun.">
        <title>Photolabeling of the alpha-neuraminidase/beta-galactosidase complex from human placenta with a photoreactive neuraminidase inhibitor.</title>
        <authorList>
            <person name="Warner T.G."/>
            <person name="Louie A."/>
            <person name="Potier M."/>
        </authorList>
    </citation>
    <scope>PROTEIN SEQUENCE OF 18-37</scope>
    <source>
        <tissue>Placenta</tissue>
    </source>
</reference>
<reference key="9">
    <citation type="journal article" date="1992" name="Biol. Chem. Hoppe-Seyler">
        <title>An investigation into the glycolipid metabolism of alpha-N-acetylgalactosaminidase-deficient fibroblasts using native and artificial glycolipids.</title>
        <authorList>
            <person name="Klima B."/>
            <person name="Pohlentz G."/>
            <person name="Schindler D."/>
            <person name="Egge H."/>
        </authorList>
    </citation>
    <scope>CATALYTIC ACTIVITY</scope>
</reference>
<reference key="10">
    <citation type="journal article" date="1998" name="J. Lipid Res.">
        <title>Degradation of blood group A glycolipid A-6-2 by normal and mutant human skin fibroblasts.</title>
        <authorList>
            <person name="Asfaw B."/>
            <person name="Schindler D."/>
            <person name="Ledvinova J."/>
            <person name="Cerny B."/>
            <person name="Smid F."/>
            <person name="Conzelmann E."/>
        </authorList>
    </citation>
    <scope>FUNCTION</scope>
    <scope>CATALYTIC ACTIVITY</scope>
    <scope>SUBCELLULAR LOCATION</scope>
</reference>
<reference key="11">
    <citation type="journal article" date="2007" name="Mol. Cell. Proteomics">
        <title>Quantitative phosphoproteome profiling of Wnt3a-mediated signaling network: indicating the involvement of ribonucleoside-diphosphate reductase M2 subunit phosphorylation at residue serine 20 in canonical Wnt signal transduction.</title>
        <authorList>
            <person name="Tang L.-Y."/>
            <person name="Deng N."/>
            <person name="Wang L.-S."/>
            <person name="Dai J."/>
            <person name="Wang Z.-L."/>
            <person name="Jiang X.-S."/>
            <person name="Li S.-J."/>
            <person name="Li L."/>
            <person name="Sheng Q.-H."/>
            <person name="Wu D.-Q."/>
            <person name="Li L."/>
            <person name="Zeng R."/>
        </authorList>
    </citation>
    <scope>PHOSPHORYLATION [LARGE SCALE ANALYSIS] AT SER-322 AND SER-332</scope>
    <scope>IDENTIFICATION BY MASS SPECTROMETRY [LARGE SCALE ANALYSIS]</scope>
    <source>
        <tissue>Embryonic kidney</tissue>
    </source>
</reference>
<reference key="12">
    <citation type="journal article" date="2009" name="J. Proteome Res.">
        <title>Glycoproteomics analysis of human liver tissue by combination of multiple enzyme digestion and hydrazide chemistry.</title>
        <authorList>
            <person name="Chen R."/>
            <person name="Jiang X."/>
            <person name="Sun D."/>
            <person name="Han G."/>
            <person name="Wang F."/>
            <person name="Ye M."/>
            <person name="Wang L."/>
            <person name="Zou H."/>
        </authorList>
    </citation>
    <scope>GLYCOSYLATION [LARGE SCALE ANALYSIS] AT ASN-177 AND ASN-201</scope>
    <source>
        <tissue>Liver</tissue>
    </source>
</reference>
<reference key="13">
    <citation type="journal article" date="2015" name="Proteomics">
        <title>N-terminome analysis of the human mitochondrial proteome.</title>
        <authorList>
            <person name="Vaca Jacome A.S."/>
            <person name="Rabilloud T."/>
            <person name="Schaeffer-Reiss C."/>
            <person name="Rompais M."/>
            <person name="Ayoub D."/>
            <person name="Lane L."/>
            <person name="Bairoch A."/>
            <person name="Van Dorsselaer A."/>
            <person name="Carapito C."/>
        </authorList>
    </citation>
    <scope>IDENTIFICATION BY MASS SPECTROMETRY [LARGE SCALE ANALYSIS]</scope>
</reference>
<reference key="14">
    <citation type="journal article" date="2009" name="J. Mol. Biol.">
        <title>The 1.9 A structure of human alpha-N-acetylgalactosaminidase: the molecular basis of Schindler and Kanzaki diseases.</title>
        <authorList>
            <person name="Clark N.E."/>
            <person name="Garman S.C."/>
        </authorList>
    </citation>
    <scope>X-RAY CRYSTALLOGRAPHY (1.9 ANGSTROMS) OF 18-411 IN COMPLEXES WITH N-ACETYLGALACTOSAMINE AND GALACTOSE</scope>
    <scope>DISULFIDE BONDS</scope>
    <scope>GLYCOSYLATION AT ASN-124; ASN-177 AND ASN-385</scope>
    <scope>SUBUNIT</scope>
    <scope>CATALYTIC ACTIVITY</scope>
    <scope>MUTAGENESIS OF ASN-201</scope>
</reference>
<reference key="15">
    <citation type="journal article" date="1990" name="J. Clin. Invest.">
        <title>Schindler disease: the molecular lesion in the alpha-N-acetylgalactosaminidase gene that causes an infantile neuroaxonal dystrophy.</title>
        <authorList>
            <person name="Wang A.M."/>
            <person name="Schindler D."/>
            <person name="Desnick R.J."/>
        </authorList>
    </citation>
    <scope>VARIANT SCHIND LYS-325</scope>
</reference>
<reference key="16">
    <citation type="journal article" date="1994" name="J. Clin. Invest.">
        <title>The molecular lesion in the alpha-N-acetylgalactosaminidase gene that causes angiokeratoma corporis diffusum with glycopeptiduria.</title>
        <authorList>
            <person name="Wang A.M."/>
            <person name="Kanzaki T."/>
            <person name="Desnick R.J."/>
        </authorList>
    </citation>
    <scope>VARIANT KANZD TRP-329</scope>
    <scope>CHARACTERIZATION OF VARIANT KANZD TRP-329</scope>
</reference>
<reference key="17">
    <citation type="journal article" date="1996" name="J. Med. Genet.">
        <title>Human alpha-N-acetylgalactosaminidase (alpha-NAGA) deficiency: new mutations and the paradox between genotype and phenotype.</title>
        <authorList>
            <person name="Keulemans J.L.M."/>
            <person name="Reuser A.J.J."/>
            <person name="Kroos M.A."/>
            <person name="Willemsen R."/>
            <person name="Hermans M.M.P."/>
            <person name="van den Ouweland A.M.W."/>
            <person name="de Jong J.G.N."/>
            <person name="Wevers R.A."/>
            <person name="Renier W.O."/>
            <person name="Schindler D."/>
            <person name="Coll M.J."/>
            <person name="Chabas A."/>
            <person name="Sakuraba H."/>
            <person name="Suzuki Y."/>
            <person name="van Diggelen O.P."/>
        </authorList>
    </citation>
    <scope>VARIANTS SCHIND CYS-160 AND LYS-325</scope>
</reference>
<reference key="18">
    <citation type="journal article" date="2001" name="Br. J. Dermatol.">
        <title>A new case of alpha-N-acetylgalactosaminidase deficiency with angiokeratoma corporis diffusum, with Meniere's syndrome and without mental retardation.</title>
        <authorList>
            <person name="Kodama K."/>
            <person name="Kobayashi H."/>
            <person name="Abe R."/>
            <person name="Ohkawara A."/>
            <person name="Yoshii N."/>
            <person name="Yotsumoto S."/>
            <person name="Fukushige T."/>
            <person name="Nagatsuka Y."/>
            <person name="Hirabayashi Y."/>
            <person name="Kanzaki T."/>
        </authorList>
    </citation>
    <scope>VARIANT KANZD GLN-329</scope>
</reference>
<name>NAGAB_HUMAN</name>
<evidence type="ECO:0000255" key="1"/>
<evidence type="ECO:0000269" key="2">
    <source>
    </source>
</evidence>
<evidence type="ECO:0000269" key="3">
    <source>
    </source>
</evidence>
<evidence type="ECO:0000269" key="4">
    <source>
    </source>
</evidence>
<evidence type="ECO:0000269" key="5">
    <source>
    </source>
</evidence>
<evidence type="ECO:0000269" key="6">
    <source>
    </source>
</evidence>
<evidence type="ECO:0000269" key="7">
    <source>
    </source>
</evidence>
<evidence type="ECO:0000269" key="8">
    <source>
    </source>
</evidence>
<evidence type="ECO:0000269" key="9">
    <source>
    </source>
</evidence>
<evidence type="ECO:0000269" key="10">
    <source>
    </source>
</evidence>
<evidence type="ECO:0000305" key="11"/>
<evidence type="ECO:0000312" key="12">
    <source>
        <dbReference type="HGNC" id="HGNC:7631"/>
    </source>
</evidence>
<evidence type="ECO:0007744" key="13">
    <source>
    </source>
</evidence>
<evidence type="ECO:0007829" key="14">
    <source>
        <dbReference type="PDB" id="4DO4"/>
    </source>
</evidence>
<proteinExistence type="evidence at protein level"/>
<keyword id="KW-0002">3D-structure</keyword>
<keyword id="KW-0903">Direct protein sequencing</keyword>
<keyword id="KW-0225">Disease variant</keyword>
<keyword id="KW-1015">Disulfide bond</keyword>
<keyword id="KW-0887">Epilepsy</keyword>
<keyword id="KW-0325">Glycoprotein</keyword>
<keyword id="KW-0326">Glycosidase</keyword>
<keyword id="KW-0378">Hydrolase</keyword>
<keyword id="KW-0443">Lipid metabolism</keyword>
<keyword id="KW-0458">Lysosome</keyword>
<keyword id="KW-0597">Phosphoprotein</keyword>
<keyword id="KW-1267">Proteomics identification</keyword>
<keyword id="KW-1185">Reference proteome</keyword>
<keyword id="KW-0732">Signal</keyword>